<organism>
    <name type="scientific">Maize streak virus genotype D (isolate Raw)</name>
    <name type="common">MSV</name>
    <dbReference type="NCBI Taxonomy" id="268343"/>
    <lineage>
        <taxon>Viruses</taxon>
        <taxon>Monodnaviria</taxon>
        <taxon>Shotokuvirae</taxon>
        <taxon>Cressdnaviricota</taxon>
        <taxon>Repensiviricetes</taxon>
        <taxon>Geplafuvirales</taxon>
        <taxon>Geminiviridae</taxon>
        <taxon>Mastrevirus</taxon>
        <taxon>Maize streak virus</taxon>
    </lineage>
</organism>
<keyword id="KW-0025">Alternative splicing</keyword>
<keyword id="KW-0067">ATP-binding</keyword>
<keyword id="KW-0190">Covalent protein-DNA linkage</keyword>
<keyword id="KW-0235">DNA replication</keyword>
<keyword id="KW-0238">DNA-binding</keyword>
<keyword id="KW-0255">Endonuclease</keyword>
<keyword id="KW-0347">Helicase</keyword>
<keyword id="KW-1048">Host nucleus</keyword>
<keyword id="KW-0378">Hydrolase</keyword>
<keyword id="KW-0479">Metal-binding</keyword>
<keyword id="KW-0511">Multifunctional enzyme</keyword>
<keyword id="KW-0540">Nuclease</keyword>
<keyword id="KW-0547">Nucleotide-binding</keyword>
<keyword id="KW-0548">Nucleotidyltransferase</keyword>
<keyword id="KW-1185">Reference proteome</keyword>
<keyword id="KW-0678">Repressor</keyword>
<keyword id="KW-0808">Transferase</keyword>
<sequence length="355" mass="41391">MTSSSSNRQFLHRTANTFLTYPQCPEHPEIISQRIWDLVGRWNPLYIICAQEAHEDGNMHLHALIQTDKQVRTTDSRFFDIDGFHPNIQSAMSPNKVRDYILKEPLALFERGTFVPRKKTFLGNSSKGNSEKKPSKDEIMQDIISHATSKPEYLSMVRKSFPYDWATKLQYFEYSANKLFPDIQEEFINPHPTSEPDLLCNESIKDWLQPNIYQQADNGSRKQSLYIVGPTRTGKSTWARSLGRHNYWQNNVDWSSYNEDAIYNIVDDIPFKYCPCWKQLVGCQKEFVVNPKYGKKKKVQMKSKPTIILANSDEDWMKEMTPGQLEYFEANCMIYIMSPGEKWYSPPQLPPTEEV</sequence>
<evidence type="ECO:0000250" key="1"/>
<evidence type="ECO:0000255" key="2"/>
<evidence type="ECO:0000255" key="3">
    <source>
        <dbReference type="PROSITE-ProRule" id="PRU01364"/>
    </source>
</evidence>
<evidence type="ECO:0000305" key="4"/>
<organismHost>
    <name type="scientific">Avena sativa</name>
    <name type="common">Oat</name>
    <dbReference type="NCBI Taxonomy" id="4498"/>
</organismHost>
<organismHost>
    <name type="scientific">Axonopus compressus</name>
    <dbReference type="NCBI Taxonomy" id="217170"/>
</organismHost>
<organismHost>
    <name type="scientific">Cenchrus americanus</name>
    <name type="common">Pearl millet</name>
    <name type="synonym">Pennisetum glaucum</name>
    <dbReference type="NCBI Taxonomy" id="4543"/>
</organismHost>
<organismHost>
    <name type="scientific">Cenchrus polystachios</name>
    <dbReference type="NCBI Taxonomy" id="281129"/>
</organismHost>
<organismHost>
    <name type="scientific">Coix lacryma-jobi</name>
    <name type="common">Job's tears</name>
    <dbReference type="NCBI Taxonomy" id="4505"/>
</organismHost>
<organismHost>
    <name type="scientific">Dactyloctenium aegyptium</name>
    <dbReference type="NCBI Taxonomy" id="270102"/>
</organismHost>
<organismHost>
    <name type="scientific">Digitaria</name>
    <dbReference type="NCBI Taxonomy" id="66017"/>
</organismHost>
<organismHost>
    <name type="scientific">Echinochloa colona</name>
    <dbReference type="NCBI Taxonomy" id="90396"/>
</organismHost>
<organismHost>
    <name type="scientific">Eleusine coracana</name>
    <name type="common">Indian finger millet</name>
    <name type="synonym">Ragi</name>
    <dbReference type="NCBI Taxonomy" id="4511"/>
</organismHost>
<organismHost>
    <name type="scientific">Eleusine indica</name>
    <name type="common">Goosegrass</name>
    <name type="synonym">Cynosurus indicus</name>
    <dbReference type="NCBI Taxonomy" id="29674"/>
</organismHost>
<organismHost>
    <name type="scientific">Hordeum vulgare</name>
    <name type="common">Barley</name>
    <dbReference type="NCBI Taxonomy" id="4513"/>
</organismHost>
<organismHost>
    <name type="scientific">Megathyrsus maximus</name>
    <dbReference type="NCBI Taxonomy" id="59788"/>
</organismHost>
<organismHost>
    <name type="scientific">Melinis repens</name>
    <name type="common">Red Natal grass</name>
    <name type="synonym">Rhynchelytrum repens</name>
    <dbReference type="NCBI Taxonomy" id="29709"/>
</organismHost>
<organismHost>
    <name type="scientific">Oryza glaberrima</name>
    <name type="common">African rice</name>
    <dbReference type="NCBI Taxonomy" id="4538"/>
</organismHost>
<organismHost>
    <name type="scientific">Oryza sativa</name>
    <name type="common">Rice</name>
    <dbReference type="NCBI Taxonomy" id="4530"/>
</organismHost>
<organismHost>
    <name type="scientific">Paspalum conjugatum</name>
    <name type="common">Hilo grass</name>
    <dbReference type="NCBI Taxonomy" id="158143"/>
</organismHost>
<organismHost>
    <name type="scientific">Paspalum notatum</name>
    <name type="common">Bahia grass</name>
    <dbReference type="NCBI Taxonomy" id="147272"/>
</organismHost>
<organismHost>
    <name type="scientific">Paspalum scrobiculatum</name>
    <dbReference type="NCBI Taxonomy" id="173849"/>
</organismHost>
<organismHost>
    <name type="scientific">Rottboellia cochinchinensis</name>
    <dbReference type="NCBI Taxonomy" id="300125"/>
</organismHost>
<organismHost>
    <name type="scientific">Saccharum officinarum</name>
    <name type="common">Sugarcane</name>
    <dbReference type="NCBI Taxonomy" id="4547"/>
</organismHost>
<organismHost>
    <name type="scientific">Setaria barbata</name>
    <dbReference type="NCBI Taxonomy" id="192628"/>
</organismHost>
<organismHost>
    <name type="scientific">Triticum aestivum</name>
    <name type="common">Wheat</name>
    <dbReference type="NCBI Taxonomy" id="4565"/>
</organismHost>
<organismHost>
    <name type="scientific">Urochloa deflexa</name>
    <dbReference type="NCBI Taxonomy" id="240436"/>
</organismHost>
<organismHost>
    <name type="scientific">Zea mays</name>
    <name type="common">Maize</name>
    <dbReference type="NCBI Taxonomy" id="4577"/>
</organismHost>
<name>REP_MSVRA</name>
<feature type="chain" id="PRO_0000316936" description="Replication-associated protein">
    <location>
        <begin position="1"/>
        <end position="355"/>
    </location>
</feature>
<feature type="domain" description="CRESS-DNA virus Rep endonuclease" evidence="3">
    <location>
        <begin position="11"/>
        <end position="114"/>
    </location>
</feature>
<feature type="region of interest" description="Oligomerization" evidence="1">
    <location>
        <begin position="175"/>
        <end position="187"/>
    </location>
</feature>
<feature type="region of interest" description="Transactivation" evidence="1">
    <location>
        <begin position="252"/>
        <end position="270"/>
    </location>
</feature>
<feature type="short sequence motif" description="RCR-1" evidence="3">
    <location>
        <begin position="18"/>
        <end position="21"/>
    </location>
</feature>
<feature type="short sequence motif" description="RCR-2" evidence="3">
    <location>
        <begin position="60"/>
        <end position="62"/>
    </location>
</feature>
<feature type="short sequence motif" description="RCR-3" evidence="3">
    <location>
        <begin position="100"/>
        <end position="103"/>
    </location>
</feature>
<feature type="short sequence motif" description="Nuclear localization signal" evidence="2">
    <location>
        <begin position="292"/>
        <end position="303"/>
    </location>
</feature>
<feature type="active site" description="For DNA cleavage activity" evidence="3">
    <location>
        <position position="100"/>
    </location>
</feature>
<feature type="binding site" evidence="3">
    <location>
        <position position="52"/>
    </location>
    <ligand>
        <name>a divalent metal cation</name>
        <dbReference type="ChEBI" id="CHEBI:60240"/>
    </ligand>
</feature>
<feature type="binding site" evidence="3">
    <location>
        <position position="60"/>
    </location>
    <ligand>
        <name>a divalent metal cation</name>
        <dbReference type="ChEBI" id="CHEBI:60240"/>
    </ligand>
</feature>
<feature type="binding site" evidence="3">
    <location>
        <position position="62"/>
    </location>
    <ligand>
        <name>a divalent metal cation</name>
        <dbReference type="ChEBI" id="CHEBI:60240"/>
    </ligand>
</feature>
<feature type="binding site" evidence="3">
    <location>
        <position position="104"/>
    </location>
    <ligand>
        <name>a divalent metal cation</name>
        <dbReference type="ChEBI" id="CHEBI:60240"/>
    </ligand>
</feature>
<feature type="binding site" evidence="2">
    <location>
        <begin position="229"/>
        <end position="236"/>
    </location>
    <ligand>
        <name>ATP</name>
        <dbReference type="ChEBI" id="CHEBI:30616"/>
    </ligand>
</feature>
<protein>
    <recommendedName>
        <fullName>Replication-associated protein</fullName>
        <shortName>Rep</shortName>
        <ecNumber>2.7.7.-</ecNumber>
        <ecNumber>3.1.21.-</ecNumber>
    </recommendedName>
</protein>
<reference key="1">
    <citation type="journal article" date="2001" name="Virology">
        <title>Sequence diversity and virulence in Zea mays of Maize streak virus isolates.</title>
        <authorList>
            <person name="Martin D.P."/>
            <person name="Willment J.A."/>
            <person name="Billharz R."/>
            <person name="Velders R."/>
            <person name="Odhiambo B."/>
            <person name="Njuguna J."/>
            <person name="James D."/>
            <person name="Rybicki E.P."/>
        </authorList>
    </citation>
    <scope>NUCLEOTIDE SEQUENCE [GENOMIC DNA]</scope>
</reference>
<proteinExistence type="inferred from homology"/>
<dbReference type="EC" id="2.7.7.-"/>
<dbReference type="EC" id="3.1.21.-"/>
<dbReference type="EMBL" id="AF329889">
    <property type="protein sequence ID" value="AAK73474.1"/>
    <property type="molecule type" value="Genomic_DNA"/>
</dbReference>
<dbReference type="SMR" id="Q91MF8"/>
<dbReference type="Proteomes" id="UP000007781">
    <property type="component" value="Genome"/>
</dbReference>
<dbReference type="GO" id="GO:0042025">
    <property type="term" value="C:host cell nucleus"/>
    <property type="evidence" value="ECO:0007669"/>
    <property type="project" value="UniProtKB-SubCell"/>
</dbReference>
<dbReference type="GO" id="GO:0005524">
    <property type="term" value="F:ATP binding"/>
    <property type="evidence" value="ECO:0007669"/>
    <property type="project" value="UniProtKB-KW"/>
</dbReference>
<dbReference type="GO" id="GO:0003677">
    <property type="term" value="F:DNA binding"/>
    <property type="evidence" value="ECO:0007669"/>
    <property type="project" value="UniProtKB-KW"/>
</dbReference>
<dbReference type="GO" id="GO:0016888">
    <property type="term" value="F:endodeoxyribonuclease activity, producing 5'-phosphomonoesters"/>
    <property type="evidence" value="ECO:0007669"/>
    <property type="project" value="InterPro"/>
</dbReference>
<dbReference type="GO" id="GO:0004386">
    <property type="term" value="F:helicase activity"/>
    <property type="evidence" value="ECO:0007669"/>
    <property type="project" value="UniProtKB-KW"/>
</dbReference>
<dbReference type="GO" id="GO:0046872">
    <property type="term" value="F:metal ion binding"/>
    <property type="evidence" value="ECO:0007669"/>
    <property type="project" value="UniProtKB-KW"/>
</dbReference>
<dbReference type="GO" id="GO:0016779">
    <property type="term" value="F:nucleotidyltransferase activity"/>
    <property type="evidence" value="ECO:0007669"/>
    <property type="project" value="UniProtKB-KW"/>
</dbReference>
<dbReference type="GO" id="GO:0005198">
    <property type="term" value="F:structural molecule activity"/>
    <property type="evidence" value="ECO:0007669"/>
    <property type="project" value="InterPro"/>
</dbReference>
<dbReference type="GO" id="GO:0006260">
    <property type="term" value="P:DNA replication"/>
    <property type="evidence" value="ECO:0007669"/>
    <property type="project" value="UniProtKB-KW"/>
</dbReference>
<dbReference type="Gene3D" id="3.40.1310.20">
    <property type="match status" value="1"/>
</dbReference>
<dbReference type="Gene3D" id="3.40.50.300">
    <property type="entry name" value="P-loop containing nucleotide triphosphate hydrolases"/>
    <property type="match status" value="1"/>
</dbReference>
<dbReference type="InterPro" id="IPR049912">
    <property type="entry name" value="CRESS_DNA_REP"/>
</dbReference>
<dbReference type="InterPro" id="IPR001146">
    <property type="entry name" value="Gemini_AL1_MSV"/>
</dbReference>
<dbReference type="InterPro" id="IPR001191">
    <property type="entry name" value="Gemini_AL1_REP"/>
</dbReference>
<dbReference type="InterPro" id="IPR022692">
    <property type="entry name" value="Gemini_AL1_REP_central"/>
</dbReference>
<dbReference type="InterPro" id="IPR027417">
    <property type="entry name" value="P-loop_NTPase"/>
</dbReference>
<dbReference type="Pfam" id="PF00799">
    <property type="entry name" value="Gemini_AL1"/>
    <property type="match status" value="1"/>
</dbReference>
<dbReference type="Pfam" id="PF08283">
    <property type="entry name" value="Gemini_AL1_M"/>
    <property type="match status" value="1"/>
</dbReference>
<dbReference type="PRINTS" id="PR00227">
    <property type="entry name" value="GEMCOATAL1"/>
</dbReference>
<dbReference type="PRINTS" id="PR00229">
    <property type="entry name" value="GEMCOATMSVL1"/>
</dbReference>
<dbReference type="SUPFAM" id="SSF55464">
    <property type="entry name" value="Origin of replication-binding domain, RBD-like"/>
    <property type="match status" value="1"/>
</dbReference>
<dbReference type="SUPFAM" id="SSF52540">
    <property type="entry name" value="P-loop containing nucleoside triphosphate hydrolases"/>
    <property type="match status" value="1"/>
</dbReference>
<dbReference type="PROSITE" id="PS52020">
    <property type="entry name" value="CRESS_DNA_REP"/>
    <property type="match status" value="1"/>
</dbReference>
<gene>
    <name type="ORF">C1/C2</name>
</gene>
<accession>Q91MF8</accession>
<comment type="function">
    <text evidence="1">Essential for the replication of viral ssDNA. The closed circular ssDNA genome is first converted to a superhelical dsDNA. Rep binds a specific region at the genome origin of replication. It introduces an endonucleolytic nick within the conserved sequence 5'-TAATATTAC-3' in the intergenic region of the genome present in all geminiviruses, thereby initiating the rolling circle replication (RCR). Following cleavage, binds covalently to the 5'-phosphate of DNA as a tyrosyl ester. The cleavage gives rise to a free 3'-OH that serves as a primer for the cellular DNA polymerase. The polymerase synthesizes the (+) strand DNA by rolling circle mechanism. After one round of replication, a Rep-catalyzed nucleotidyl transfer reaction releases a circular single-stranded virus genome, thereby terminating the replication. Displays origin-specific DNA cleavage, nucleotidyl transferase, ATPase and helicase activities. Acts as an inhibitor of C-sense gene transcription (By similarity).</text>
</comment>
<comment type="cofactor">
    <cofactor evidence="3">
        <name>Mg(2+)</name>
        <dbReference type="ChEBI" id="CHEBI:18420"/>
    </cofactor>
    <cofactor evidence="3">
        <name>Mn(2+)</name>
        <dbReference type="ChEBI" id="CHEBI:29035"/>
    </cofactor>
    <text evidence="3">Divalent metal cations, possibly Mg(2+) or Mn(2+).</text>
</comment>
<comment type="subunit">
    <text>Homooligomer. Rep binds to repeated DNA motifs (iterons). Forms the O-complex, which is a Rep-DNA complex involved in the initiation of RCR. Part of the C- and V-complexes which are RepA-Rep-DNA complexes involved in the c-sense and v-sense transcription.</text>
</comment>
<comment type="subcellular location">
    <subcellularLocation>
        <location evidence="1">Host nucleus</location>
    </subcellularLocation>
</comment>
<comment type="alternative products">
    <event type="alternative splicing"/>
    <isoform>
        <id>Q91MF8-1</id>
        <name>Rep</name>
        <sequence type="displayed"/>
    </isoform>
    <isoform>
        <id>Q91MF7-1</id>
        <name>RepA</name>
        <sequence type="external"/>
    </isoform>
</comment>
<comment type="domain">
    <text>There are 3 rolling circle replication (RCR) motifs. RCR-2 is probably involved in metal coordination. RCR-3 is required for phosphodiester bond cleavage for initiation of RCR.</text>
</comment>
<comment type="similarity">
    <text evidence="4">Belongs to the geminiviridae Rep protein family.</text>
</comment>